<sequence length="769" mass="88047">MINRQYFIWYIFIFNIINKIYFENIRYVKNYEVVIRKKKNIERGIGNDFAFIRRYYKSRLLSDVSYKNNSIKGKNRVDKEGDIKKYDNNDDNKMDNSYDYKNKSIKENETKIRKEQVISLDKRYNRNINEKEEIKKKIKDIQRKRLIIYFKQDNTILSSRNYKHIFMKVLSSCGHIEKLTFINFYLYEFPKSINNEDMLLKICLRLLESRRINVENDNQISHTVQMKSYNNNNNKWDNINSKNNCIYQIKDKIKDLPNVSPSASTFTSISTSPYTLKLRDRNKYANDKNHIFKINHSNKHKNNNNNNNNNDYHNNNKSNYHSHSSAKCQTQRLNKKMIGTNILDGYDIIQMEEGLNLSHNYELNDVNVCIIDTGIDENHIDLKDNIIEKKTFMKHSYKKYNIDGINNIESDNIDGINNIESDNIDGINNIESDNIDGINNIESDNIDGINNIESDNIDGINNIKSSDNIKSSDNIKSSDNINSSDNIKSSDNNNVHTMLRNKLYLKKKKECSNYNTSNDGHGHGTFIAGIIAGNSPKGKKGIKGISKKAKLIICKALNNNNAGYISDILECFNFCAKKKARIINASFASTTHYPSLFQALKELQDKDILVISSSGNCSSNSKCKQAFQECNLNIQKLYPAAYSADLNNIISVSNIIQQSNGNIVLSPDSCYSPNYVHLAAPGGNIISTFPNNKYAISSGTSFSASVITGLASLVLSINSNLTSQQVIELFKKSIVQTKSLENKVKWGGFINVYDLVRFTIDSLPKDKDE</sequence>
<dbReference type="EC" id="3.4.21.62" evidence="4 5"/>
<dbReference type="EMBL" id="AL844504">
    <property type="protein sequence ID" value="CAD51437.1"/>
    <property type="molecule type" value="Genomic_DNA"/>
</dbReference>
<dbReference type="RefSeq" id="XP_001351630.1">
    <property type="nucleotide sequence ID" value="XM_001351594.1"/>
</dbReference>
<dbReference type="SMR" id="Q8I430"/>
<dbReference type="FunCoup" id="Q8I430">
    <property type="interactions" value="288"/>
</dbReference>
<dbReference type="STRING" id="36329.Q8I430"/>
<dbReference type="MEROPS" id="S08.122"/>
<dbReference type="GlyCosmos" id="Q8I430">
    <property type="glycosylation" value="11 sites, No reported glycans"/>
</dbReference>
<dbReference type="PaxDb" id="5833-PFE0355c"/>
<dbReference type="EnsemblProtists" id="CAD51437">
    <property type="protein sequence ID" value="CAD51437"/>
    <property type="gene ID" value="PF3D7_0507200"/>
</dbReference>
<dbReference type="GeneID" id="812882"/>
<dbReference type="KEGG" id="pfa:PF3D7_0507200"/>
<dbReference type="VEuPathDB" id="PlasmoDB:PF3D7_0507200"/>
<dbReference type="HOGENOM" id="CLU_363506_0_0_1"/>
<dbReference type="InParanoid" id="Q8I430"/>
<dbReference type="OMA" id="NNNVHTM"/>
<dbReference type="OrthoDB" id="531541at2759"/>
<dbReference type="PhylomeDB" id="Q8I430"/>
<dbReference type="Proteomes" id="UP000001450">
    <property type="component" value="Chromosome 5"/>
</dbReference>
<dbReference type="GO" id="GO:0005615">
    <property type="term" value="C:extracellular space"/>
    <property type="evidence" value="ECO:0000314"/>
    <property type="project" value="UniProtKB"/>
</dbReference>
<dbReference type="GO" id="GO:0004252">
    <property type="term" value="F:serine-type endopeptidase activity"/>
    <property type="evidence" value="ECO:0000314"/>
    <property type="project" value="UniProtKB"/>
</dbReference>
<dbReference type="GO" id="GO:0016485">
    <property type="term" value="P:protein processing"/>
    <property type="evidence" value="ECO:0000315"/>
    <property type="project" value="UniProtKB"/>
</dbReference>
<dbReference type="GO" id="GO:0006508">
    <property type="term" value="P:proteolysis"/>
    <property type="evidence" value="ECO:0000314"/>
    <property type="project" value="GeneDB"/>
</dbReference>
<dbReference type="Gene3D" id="3.40.50.200">
    <property type="entry name" value="Peptidase S8/S53 domain"/>
    <property type="match status" value="1"/>
</dbReference>
<dbReference type="InterPro" id="IPR000209">
    <property type="entry name" value="Peptidase_S8/S53_dom"/>
</dbReference>
<dbReference type="InterPro" id="IPR036852">
    <property type="entry name" value="Peptidase_S8/S53_dom_sf"/>
</dbReference>
<dbReference type="InterPro" id="IPR051048">
    <property type="entry name" value="Peptidase_S8/S53_subtilisin"/>
</dbReference>
<dbReference type="InterPro" id="IPR023827">
    <property type="entry name" value="Peptidase_S8_Asp-AS"/>
</dbReference>
<dbReference type="InterPro" id="IPR022398">
    <property type="entry name" value="Peptidase_S8_His-AS"/>
</dbReference>
<dbReference type="InterPro" id="IPR015500">
    <property type="entry name" value="Peptidase_S8_subtilisin-rel"/>
</dbReference>
<dbReference type="PANTHER" id="PTHR43399:SF4">
    <property type="entry name" value="CELL WALL-ASSOCIATED PROTEASE"/>
    <property type="match status" value="1"/>
</dbReference>
<dbReference type="PANTHER" id="PTHR43399">
    <property type="entry name" value="SUBTILISIN-RELATED"/>
    <property type="match status" value="1"/>
</dbReference>
<dbReference type="Pfam" id="PF00082">
    <property type="entry name" value="Peptidase_S8"/>
    <property type="match status" value="1"/>
</dbReference>
<dbReference type="PRINTS" id="PR00723">
    <property type="entry name" value="SUBTILISIN"/>
</dbReference>
<dbReference type="SUPFAM" id="SSF52743">
    <property type="entry name" value="Subtilisin-like"/>
    <property type="match status" value="1"/>
</dbReference>
<dbReference type="PROSITE" id="PS51892">
    <property type="entry name" value="SUBTILASE"/>
    <property type="match status" value="1"/>
</dbReference>
<dbReference type="PROSITE" id="PS00136">
    <property type="entry name" value="SUBTILASE_ASP"/>
    <property type="match status" value="1"/>
</dbReference>
<dbReference type="PROSITE" id="PS00137">
    <property type="entry name" value="SUBTILASE_HIS"/>
    <property type="match status" value="1"/>
</dbReference>
<keyword id="KW-0325">Glycoprotein</keyword>
<keyword id="KW-0378">Hydrolase</keyword>
<keyword id="KW-0645">Protease</keyword>
<keyword id="KW-1185">Reference proteome</keyword>
<keyword id="KW-0964">Secreted</keyword>
<keyword id="KW-0720">Serine protease</keyword>
<keyword id="KW-0732">Signal</keyword>
<keyword id="KW-0865">Zymogen</keyword>
<feature type="signal peptide" evidence="7">
    <location>
        <begin position="1"/>
        <end status="unknown"/>
    </location>
</feature>
<feature type="propeptide" id="PRO_0000450754" evidence="8">
    <location>
        <begin status="unknown"/>
        <end position="515" status="uncertain"/>
    </location>
</feature>
<feature type="chain" id="PRO_0000450755" description="Subtilisin-like protease 3" evidence="8">
    <location>
        <begin position="516" status="uncertain"/>
        <end position="769"/>
    </location>
</feature>
<feature type="domain" description="Peptidase S8" evidence="2">
    <location>
        <begin position="345"/>
        <end position="756"/>
    </location>
</feature>
<feature type="region of interest" description="Disordered" evidence="3">
    <location>
        <begin position="293"/>
        <end position="329"/>
    </location>
</feature>
<feature type="region of interest" description="Disordered" evidence="3">
    <location>
        <begin position="468"/>
        <end position="493"/>
    </location>
</feature>
<feature type="compositionally biased region" description="Basic residues" evidence="3">
    <location>
        <begin position="293"/>
        <end position="302"/>
    </location>
</feature>
<feature type="compositionally biased region" description="Low complexity" evidence="3">
    <location>
        <begin position="303"/>
        <end position="325"/>
    </location>
</feature>
<feature type="active site" description="Charge relay system" evidence="2">
    <location>
        <position position="372"/>
    </location>
</feature>
<feature type="active site" description="Charge relay system" evidence="2">
    <location>
        <position position="523"/>
    </location>
</feature>
<feature type="active site" description="Charge relay system" evidence="2">
    <location>
        <position position="701"/>
    </location>
</feature>
<feature type="glycosylation site" description="N-linked (GlcNAc...) asparagine" evidence="1">
    <location>
        <position position="68"/>
    </location>
</feature>
<feature type="glycosylation site" description="N-linked (GlcNAc...) asparagine" evidence="1">
    <location>
        <position position="102"/>
    </location>
</feature>
<feature type="glycosylation site" description="N-linked (GlcNAc...) asparagine" evidence="1">
    <location>
        <position position="108"/>
    </location>
</feature>
<feature type="glycosylation site" description="N-linked (GlcNAc...) asparagine" evidence="1">
    <location>
        <position position="295"/>
    </location>
</feature>
<feature type="glycosylation site" description="N-linked (GlcNAc...) asparagine" evidence="1">
    <location>
        <position position="316"/>
    </location>
</feature>
<feature type="glycosylation site" description="N-linked (GlcNAc...) asparagine" evidence="1">
    <location>
        <position position="356"/>
    </location>
</feature>
<feature type="glycosylation site" description="N-linked (GlcNAc...) asparagine" evidence="1">
    <location>
        <position position="482"/>
    </location>
</feature>
<feature type="glycosylation site" description="N-linked (GlcNAc...) asparagine" evidence="1">
    <location>
        <position position="515"/>
    </location>
</feature>
<feature type="glycosylation site" description="N-linked (GlcNAc...) asparagine" evidence="1">
    <location>
        <position position="584"/>
    </location>
</feature>
<feature type="glycosylation site" description="N-linked (GlcNAc...) asparagine" evidence="1">
    <location>
        <position position="616"/>
    </location>
</feature>
<feature type="glycosylation site" description="N-linked (GlcNAc...) asparagine" evidence="1">
    <location>
        <position position="720"/>
    </location>
</feature>
<name>SUB3_PLAF7</name>
<proteinExistence type="evidence at protein level"/>
<evidence type="ECO:0000255" key="1">
    <source>
        <dbReference type="PROSITE-ProRule" id="PRU00498"/>
    </source>
</evidence>
<evidence type="ECO:0000255" key="2">
    <source>
        <dbReference type="PROSITE-ProRule" id="PRU01240"/>
    </source>
</evidence>
<evidence type="ECO:0000256" key="3">
    <source>
        <dbReference type="SAM" id="MobiDB-lite"/>
    </source>
</evidence>
<evidence type="ECO:0000269" key="4">
    <source>
    </source>
</evidence>
<evidence type="ECO:0000269" key="5">
    <source>
    </source>
</evidence>
<evidence type="ECO:0000303" key="6">
    <source>
    </source>
</evidence>
<evidence type="ECO:0000305" key="7"/>
<evidence type="ECO:0000305" key="8">
    <source>
    </source>
</evidence>
<evidence type="ECO:0000312" key="9">
    <source>
        <dbReference type="EMBL" id="CAD51437.1"/>
    </source>
</evidence>
<evidence type="ECO:0000312" key="10">
    <source>
        <dbReference type="Proteomes" id="UP000001450"/>
    </source>
</evidence>
<protein>
    <recommendedName>
        <fullName evidence="6">Subtilisin-like protease 3</fullName>
        <ecNumber evidence="4 5">3.4.21.62</ecNumber>
    </recommendedName>
    <alternativeName>
        <fullName evidence="6">PfSUB3</fullName>
    </alternativeName>
</protein>
<reference evidence="10" key="1">
    <citation type="journal article" date="2002" name="Nature">
        <title>Genome sequence of the human malaria parasite Plasmodium falciparum.</title>
        <authorList>
            <person name="Gardner M.J."/>
            <person name="Hall N."/>
            <person name="Fung E."/>
            <person name="White O."/>
            <person name="Berriman M."/>
            <person name="Hyman R.W."/>
            <person name="Carlton J.M."/>
            <person name="Pain A."/>
            <person name="Nelson K.E."/>
            <person name="Bowman S."/>
            <person name="Paulsen I.T."/>
            <person name="James K.D."/>
            <person name="Eisen J.A."/>
            <person name="Rutherford K.M."/>
            <person name="Salzberg S.L."/>
            <person name="Craig A."/>
            <person name="Kyes S."/>
            <person name="Chan M.-S."/>
            <person name="Nene V."/>
            <person name="Shallom S.J."/>
            <person name="Suh B."/>
            <person name="Peterson J."/>
            <person name="Angiuoli S."/>
            <person name="Pertea M."/>
            <person name="Allen J."/>
            <person name="Selengut J."/>
            <person name="Haft D."/>
            <person name="Mather M.W."/>
            <person name="Vaidya A.B."/>
            <person name="Martin D.M.A."/>
            <person name="Fairlamb A.H."/>
            <person name="Fraunholz M.J."/>
            <person name="Roos D.S."/>
            <person name="Ralph S.A."/>
            <person name="McFadden G.I."/>
            <person name="Cummings L.M."/>
            <person name="Subramanian G.M."/>
            <person name="Mungall C."/>
            <person name="Venter J.C."/>
            <person name="Carucci D.J."/>
            <person name="Hoffman S.L."/>
            <person name="Newbold C."/>
            <person name="Davis R.W."/>
            <person name="Fraser C.M."/>
            <person name="Barrell B.G."/>
        </authorList>
    </citation>
    <scope>NUCLEOTIDE SEQUENCE [LARGE SCALE GENOMIC DNA]</scope>
    <source>
        <strain evidence="10">3D7</strain>
    </source>
</reference>
<reference evidence="10" key="2">
    <citation type="journal article" date="2002" name="Nature">
        <title>Sequence of Plasmodium falciparum chromosomes 1, 3-9 and 13.</title>
        <authorList>
            <person name="Hall N."/>
            <person name="Pain A."/>
            <person name="Berriman M."/>
            <person name="Churcher C.M."/>
            <person name="Harris B."/>
            <person name="Harris D."/>
            <person name="Mungall K.L."/>
            <person name="Bowman S."/>
            <person name="Atkin R."/>
            <person name="Baker S."/>
            <person name="Barron A."/>
            <person name="Brooks K."/>
            <person name="Buckee C.O."/>
            <person name="Burrows C."/>
            <person name="Cherevach I."/>
            <person name="Chillingworth C."/>
            <person name="Chillingworth T."/>
            <person name="Christodoulou Z."/>
            <person name="Clark L."/>
            <person name="Clark R."/>
            <person name="Corton C."/>
            <person name="Cronin A."/>
            <person name="Davies R.M."/>
            <person name="Davis P."/>
            <person name="Dear P."/>
            <person name="Dearden F."/>
            <person name="Doggett J."/>
            <person name="Feltwell T."/>
            <person name="Goble A."/>
            <person name="Goodhead I."/>
            <person name="Gwilliam R."/>
            <person name="Hamlin N."/>
            <person name="Hance Z."/>
            <person name="Harper D."/>
            <person name="Hauser H."/>
            <person name="Hornsby T."/>
            <person name="Holroyd S."/>
            <person name="Horrocks P."/>
            <person name="Humphray S."/>
            <person name="Jagels K."/>
            <person name="James K.D."/>
            <person name="Johnson D."/>
            <person name="Kerhornou A."/>
            <person name="Knights A."/>
            <person name="Konfortov B."/>
            <person name="Kyes S."/>
            <person name="Larke N."/>
            <person name="Lawson D."/>
            <person name="Lennard N."/>
            <person name="Line A."/>
            <person name="Maddison M."/>
            <person name="Mclean J."/>
            <person name="Mooney P."/>
            <person name="Moule S."/>
            <person name="Murphy L."/>
            <person name="Oliver K."/>
            <person name="Ormond D."/>
            <person name="Price C."/>
            <person name="Quail M.A."/>
            <person name="Rabbinowitsch E."/>
            <person name="Rajandream M.A."/>
            <person name="Rutter S."/>
            <person name="Rutherford K.M."/>
            <person name="Sanders M."/>
            <person name="Simmonds M."/>
            <person name="Seeger K."/>
            <person name="Sharp S."/>
            <person name="Smith R."/>
            <person name="Squares R."/>
            <person name="Squares S."/>
            <person name="Stevens K."/>
            <person name="Taylor K."/>
            <person name="Tivey A."/>
            <person name="Unwin L."/>
            <person name="Whitehead S."/>
            <person name="Woodward J.R."/>
            <person name="Sulston J.E."/>
            <person name="Craig A."/>
            <person name="Newbold C."/>
            <person name="Barrell B.G."/>
        </authorList>
    </citation>
    <scope>NUCLEOTIDE SEQUENCE [LARGE SCALE GENOMIC DNA]</scope>
    <source>
        <strain evidence="10">3D7</strain>
    </source>
</reference>
<reference evidence="7" key="3">
    <citation type="journal article" date="2012" name="Mol. Biochem. Parasitol.">
        <title>Expression and characterization of catalytic domain of Plasmodium falciparum subtilisin-like protease 3.</title>
        <authorList>
            <person name="Alam A."/>
            <person name="Bhatnagar R.K."/>
            <person name="Chauhan V.S."/>
        </authorList>
    </citation>
    <scope>CATALYTIC ACTIVITY</scope>
    <scope>SUBCELLULAR LOCATION</scope>
    <scope>DEVELOPMENTAL STAGE</scope>
</reference>
<reference evidence="7" key="4">
    <citation type="journal article" date="2013" name="Mol. Biochem. Parasitol.">
        <title>Proteolytic activity of Plasmodium falciparum subtilisin-like protease 3 on parasite profilin, a multifunctional protein.</title>
        <authorList>
            <person name="Alam A."/>
            <person name="Bhatnagar R.K."/>
            <person name="Relan U."/>
            <person name="Mukherjee P."/>
            <person name="Chauhan V.S."/>
        </authorList>
    </citation>
    <scope>FUNCTION</scope>
    <scope>CATALYTIC ACTIVITY</scope>
</reference>
<accession>Q8I430</accession>
<comment type="function">
    <text evidence="5">Serine protease which may cleave PFN/profilin.</text>
</comment>
<comment type="catalytic activity">
    <reaction evidence="4 5">
        <text>Hydrolysis of proteins with broad specificity for peptide bonds, and a preference for a large uncharged residue in P1. Hydrolyzes peptide amides.</text>
        <dbReference type="EC" id="3.4.21.62"/>
    </reaction>
</comment>
<comment type="subcellular location">
    <subcellularLocation>
        <location evidence="4">Secreted</location>
    </subcellularLocation>
</comment>
<comment type="developmental stage">
    <text evidence="4">Expressed during the parasite blood stage, specifically in schizonts (at protein level).</text>
</comment>
<comment type="similarity">
    <text evidence="2">Belongs to the peptidase S8 family.</text>
</comment>
<gene>
    <name evidence="6" type="primary">SUB3</name>
    <name evidence="9" type="ORF">PF3D7_0507200</name>
</gene>
<organism evidence="10">
    <name type="scientific">Plasmodium falciparum (isolate 3D7)</name>
    <dbReference type="NCBI Taxonomy" id="36329"/>
    <lineage>
        <taxon>Eukaryota</taxon>
        <taxon>Sar</taxon>
        <taxon>Alveolata</taxon>
        <taxon>Apicomplexa</taxon>
        <taxon>Aconoidasida</taxon>
        <taxon>Haemosporida</taxon>
        <taxon>Plasmodiidae</taxon>
        <taxon>Plasmodium</taxon>
        <taxon>Plasmodium (Laverania)</taxon>
    </lineage>
</organism>